<organism>
    <name type="scientific">Alkaliphilus metalliredigens (strain QYMF)</name>
    <dbReference type="NCBI Taxonomy" id="293826"/>
    <lineage>
        <taxon>Bacteria</taxon>
        <taxon>Bacillati</taxon>
        <taxon>Bacillota</taxon>
        <taxon>Clostridia</taxon>
        <taxon>Peptostreptococcales</taxon>
        <taxon>Natronincolaceae</taxon>
        <taxon>Alkaliphilus</taxon>
    </lineage>
</organism>
<protein>
    <recommendedName>
        <fullName evidence="1">Sugar fermentation stimulation protein homolog</fullName>
    </recommendedName>
</protein>
<evidence type="ECO:0000255" key="1">
    <source>
        <dbReference type="HAMAP-Rule" id="MF_00095"/>
    </source>
</evidence>
<feature type="chain" id="PRO_0000340131" description="Sugar fermentation stimulation protein homolog">
    <location>
        <begin position="1"/>
        <end position="232"/>
    </location>
</feature>
<gene>
    <name evidence="1" type="primary">sfsA</name>
    <name type="ordered locus">Amet_2465</name>
</gene>
<reference key="1">
    <citation type="journal article" date="2016" name="Genome Announc.">
        <title>Complete genome sequence of Alkaliphilus metalliredigens strain QYMF, an alkaliphilic and metal-reducing bacterium isolated from borax-contaminated leachate ponds.</title>
        <authorList>
            <person name="Hwang C."/>
            <person name="Copeland A."/>
            <person name="Lucas S."/>
            <person name="Lapidus A."/>
            <person name="Barry K."/>
            <person name="Detter J.C."/>
            <person name="Glavina Del Rio T."/>
            <person name="Hammon N."/>
            <person name="Israni S."/>
            <person name="Dalin E."/>
            <person name="Tice H."/>
            <person name="Pitluck S."/>
            <person name="Chertkov O."/>
            <person name="Brettin T."/>
            <person name="Bruce D."/>
            <person name="Han C."/>
            <person name="Schmutz J."/>
            <person name="Larimer F."/>
            <person name="Land M.L."/>
            <person name="Hauser L."/>
            <person name="Kyrpides N."/>
            <person name="Mikhailova N."/>
            <person name="Ye Q."/>
            <person name="Zhou J."/>
            <person name="Richardson P."/>
            <person name="Fields M.W."/>
        </authorList>
    </citation>
    <scope>NUCLEOTIDE SEQUENCE [LARGE SCALE GENOMIC DNA]</scope>
    <source>
        <strain>QYMF</strain>
    </source>
</reference>
<dbReference type="EMBL" id="CP000724">
    <property type="protein sequence ID" value="ABR48619.1"/>
    <property type="molecule type" value="Genomic_DNA"/>
</dbReference>
<dbReference type="RefSeq" id="WP_012063594.1">
    <property type="nucleotide sequence ID" value="NC_009633.1"/>
</dbReference>
<dbReference type="SMR" id="A6TR01"/>
<dbReference type="STRING" id="293826.Amet_2465"/>
<dbReference type="KEGG" id="amt:Amet_2465"/>
<dbReference type="eggNOG" id="COG1489">
    <property type="taxonomic scope" value="Bacteria"/>
</dbReference>
<dbReference type="HOGENOM" id="CLU_052299_1_0_9"/>
<dbReference type="OrthoDB" id="9802365at2"/>
<dbReference type="Proteomes" id="UP000001572">
    <property type="component" value="Chromosome"/>
</dbReference>
<dbReference type="GO" id="GO:0003677">
    <property type="term" value="F:DNA binding"/>
    <property type="evidence" value="ECO:0007669"/>
    <property type="project" value="InterPro"/>
</dbReference>
<dbReference type="CDD" id="cd22359">
    <property type="entry name" value="SfsA-like_bacterial"/>
    <property type="match status" value="1"/>
</dbReference>
<dbReference type="Gene3D" id="2.40.50.580">
    <property type="match status" value="1"/>
</dbReference>
<dbReference type="Gene3D" id="3.40.1350.60">
    <property type="match status" value="1"/>
</dbReference>
<dbReference type="HAMAP" id="MF_00095">
    <property type="entry name" value="SfsA"/>
    <property type="match status" value="1"/>
</dbReference>
<dbReference type="InterPro" id="IPR005224">
    <property type="entry name" value="SfsA"/>
</dbReference>
<dbReference type="InterPro" id="IPR040452">
    <property type="entry name" value="SfsA_C"/>
</dbReference>
<dbReference type="InterPro" id="IPR041465">
    <property type="entry name" value="SfsA_N"/>
</dbReference>
<dbReference type="NCBIfam" id="TIGR00230">
    <property type="entry name" value="sfsA"/>
    <property type="match status" value="1"/>
</dbReference>
<dbReference type="PANTHER" id="PTHR30545">
    <property type="entry name" value="SUGAR FERMENTATION STIMULATION PROTEIN A"/>
    <property type="match status" value="1"/>
</dbReference>
<dbReference type="PANTHER" id="PTHR30545:SF2">
    <property type="entry name" value="SUGAR FERMENTATION STIMULATION PROTEIN A"/>
    <property type="match status" value="1"/>
</dbReference>
<dbReference type="Pfam" id="PF03749">
    <property type="entry name" value="SfsA"/>
    <property type="match status" value="1"/>
</dbReference>
<dbReference type="Pfam" id="PF17746">
    <property type="entry name" value="SfsA_N"/>
    <property type="match status" value="1"/>
</dbReference>
<name>SFSA_ALKMQ</name>
<comment type="similarity">
    <text evidence="1">Belongs to the SfsA family.</text>
</comment>
<proteinExistence type="inferred from homology"/>
<keyword id="KW-1185">Reference proteome</keyword>
<sequence>MKIYIEGEKIRGTFQKRVNRFIAEVKVGSQLVVVHVANTGRMKELLTPGAEVLLRRVNEPHRKTNYDLLMVYHKGILVSIDSKLPNRLLYQGFINKEIVAFDKFNEVKREVTYGKSRLDLALINEEKELVLIEAKCVTLVKEGELASFPDAPTERGTRHVRELTEAVKQNIRGAVFFIVQREDAVRFTPNKEMDPQFQQAVTEAKKAGVEFYAYNCIVTEDYIAINDELEIF</sequence>
<accession>A6TR01</accession>